<reference key="1">
    <citation type="submission" date="2006-12" db="EMBL/GenBank/DDBJ databases">
        <title>Complete sequence of chromosome 1 of Acidovorax sp. JS42.</title>
        <authorList>
            <person name="Copeland A."/>
            <person name="Lucas S."/>
            <person name="Lapidus A."/>
            <person name="Barry K."/>
            <person name="Detter J.C."/>
            <person name="Glavina del Rio T."/>
            <person name="Dalin E."/>
            <person name="Tice H."/>
            <person name="Pitluck S."/>
            <person name="Chertkov O."/>
            <person name="Brettin T."/>
            <person name="Bruce D."/>
            <person name="Han C."/>
            <person name="Tapia R."/>
            <person name="Gilna P."/>
            <person name="Schmutz J."/>
            <person name="Larimer F."/>
            <person name="Land M."/>
            <person name="Hauser L."/>
            <person name="Kyrpides N."/>
            <person name="Kim E."/>
            <person name="Stahl D."/>
            <person name="Richardson P."/>
        </authorList>
    </citation>
    <scope>NUCLEOTIDE SEQUENCE [LARGE SCALE GENOMIC DNA]</scope>
    <source>
        <strain>JS42</strain>
    </source>
</reference>
<name>NUOC_ACISJ</name>
<keyword id="KW-0997">Cell inner membrane</keyword>
<keyword id="KW-1003">Cell membrane</keyword>
<keyword id="KW-0472">Membrane</keyword>
<keyword id="KW-0520">NAD</keyword>
<keyword id="KW-0874">Quinone</keyword>
<keyword id="KW-1278">Translocase</keyword>
<keyword id="KW-0813">Transport</keyword>
<keyword id="KW-0830">Ubiquinone</keyword>
<protein>
    <recommendedName>
        <fullName evidence="1">NADH-quinone oxidoreductase subunit C</fullName>
        <ecNumber evidence="1">7.1.1.-</ecNumber>
    </recommendedName>
    <alternativeName>
        <fullName evidence="1">NADH dehydrogenase I subunit C</fullName>
    </alternativeName>
    <alternativeName>
        <fullName evidence="1">NDH-1 subunit C</fullName>
    </alternativeName>
</protein>
<proteinExistence type="inferred from homology"/>
<sequence>MTAIAIHPESLRDVVASALGDRVRQISVALDEVTVVVSAARYLEAMQILRDAPDCKFEQLIDLCGVDYSAYGATGSEGPRYAVVSHLLSVSLNQRLRVKVFCSDDDFPIVASVTDIWNSANWFEREAFDLFGIVFDGHNDLRRILTDYGFIGHPFRKDFPLSGHVEMRYDADQRRVIYEPVTIEPREVTPRVIREDKYGGLH</sequence>
<comment type="function">
    <text evidence="1">NDH-1 shuttles electrons from NADH, via FMN and iron-sulfur (Fe-S) centers, to quinones in the respiratory chain. The immediate electron acceptor for the enzyme in this species is believed to be ubiquinone. Couples the redox reaction to proton translocation (for every two electrons transferred, four hydrogen ions are translocated across the cytoplasmic membrane), and thus conserves the redox energy in a proton gradient.</text>
</comment>
<comment type="catalytic activity">
    <reaction evidence="1">
        <text>a quinone + NADH + 5 H(+)(in) = a quinol + NAD(+) + 4 H(+)(out)</text>
        <dbReference type="Rhea" id="RHEA:57888"/>
        <dbReference type="ChEBI" id="CHEBI:15378"/>
        <dbReference type="ChEBI" id="CHEBI:24646"/>
        <dbReference type="ChEBI" id="CHEBI:57540"/>
        <dbReference type="ChEBI" id="CHEBI:57945"/>
        <dbReference type="ChEBI" id="CHEBI:132124"/>
    </reaction>
</comment>
<comment type="subunit">
    <text evidence="1">NDH-1 is composed of 14 different subunits. Subunits NuoB, C, D, E, F, and G constitute the peripheral sector of the complex.</text>
</comment>
<comment type="subcellular location">
    <subcellularLocation>
        <location evidence="1">Cell inner membrane</location>
        <topology evidence="1">Peripheral membrane protein</topology>
        <orientation evidence="1">Cytoplasmic side</orientation>
    </subcellularLocation>
</comment>
<comment type="similarity">
    <text evidence="1">Belongs to the complex I 30 kDa subunit family.</text>
</comment>
<gene>
    <name evidence="1" type="primary">nuoC</name>
    <name type="ordered locus">Ajs_0959</name>
</gene>
<organism>
    <name type="scientific">Acidovorax sp. (strain JS42)</name>
    <dbReference type="NCBI Taxonomy" id="232721"/>
    <lineage>
        <taxon>Bacteria</taxon>
        <taxon>Pseudomonadati</taxon>
        <taxon>Pseudomonadota</taxon>
        <taxon>Betaproteobacteria</taxon>
        <taxon>Burkholderiales</taxon>
        <taxon>Comamonadaceae</taxon>
        <taxon>Acidovorax</taxon>
    </lineage>
</organism>
<accession>A1W4M4</accession>
<dbReference type="EC" id="7.1.1.-" evidence="1"/>
<dbReference type="EMBL" id="CP000539">
    <property type="protein sequence ID" value="ABM41199.1"/>
    <property type="molecule type" value="Genomic_DNA"/>
</dbReference>
<dbReference type="SMR" id="A1W4M4"/>
<dbReference type="STRING" id="232721.Ajs_0959"/>
<dbReference type="KEGG" id="ajs:Ajs_0959"/>
<dbReference type="eggNOG" id="COG0852">
    <property type="taxonomic scope" value="Bacteria"/>
</dbReference>
<dbReference type="HOGENOM" id="CLU_042628_2_1_4"/>
<dbReference type="Proteomes" id="UP000000645">
    <property type="component" value="Chromosome"/>
</dbReference>
<dbReference type="GO" id="GO:0005886">
    <property type="term" value="C:plasma membrane"/>
    <property type="evidence" value="ECO:0007669"/>
    <property type="project" value="UniProtKB-SubCell"/>
</dbReference>
<dbReference type="GO" id="GO:0008137">
    <property type="term" value="F:NADH dehydrogenase (ubiquinone) activity"/>
    <property type="evidence" value="ECO:0007669"/>
    <property type="project" value="InterPro"/>
</dbReference>
<dbReference type="GO" id="GO:0050136">
    <property type="term" value="F:NADH:ubiquinone reductase (non-electrogenic) activity"/>
    <property type="evidence" value="ECO:0007669"/>
    <property type="project" value="UniProtKB-UniRule"/>
</dbReference>
<dbReference type="GO" id="GO:0048038">
    <property type="term" value="F:quinone binding"/>
    <property type="evidence" value="ECO:0007669"/>
    <property type="project" value="UniProtKB-KW"/>
</dbReference>
<dbReference type="Gene3D" id="3.30.460.80">
    <property type="entry name" value="NADH:ubiquinone oxidoreductase, 30kDa subunit"/>
    <property type="match status" value="1"/>
</dbReference>
<dbReference type="HAMAP" id="MF_01357">
    <property type="entry name" value="NDH1_NuoC"/>
    <property type="match status" value="1"/>
</dbReference>
<dbReference type="InterPro" id="IPR010218">
    <property type="entry name" value="NADH_DH_suC"/>
</dbReference>
<dbReference type="InterPro" id="IPR037232">
    <property type="entry name" value="NADH_quin_OxRdtase_su_C/D-like"/>
</dbReference>
<dbReference type="InterPro" id="IPR001268">
    <property type="entry name" value="NADH_UbQ_OxRdtase_30kDa_su"/>
</dbReference>
<dbReference type="InterPro" id="IPR020396">
    <property type="entry name" value="NADH_UbQ_OxRdtase_CS"/>
</dbReference>
<dbReference type="NCBIfam" id="TIGR01961">
    <property type="entry name" value="NuoC_fam"/>
    <property type="match status" value="1"/>
</dbReference>
<dbReference type="NCBIfam" id="NF004730">
    <property type="entry name" value="PRK06074.1-1"/>
    <property type="match status" value="1"/>
</dbReference>
<dbReference type="PANTHER" id="PTHR10884:SF14">
    <property type="entry name" value="NADH DEHYDROGENASE [UBIQUINONE] IRON-SULFUR PROTEIN 3, MITOCHONDRIAL"/>
    <property type="match status" value="1"/>
</dbReference>
<dbReference type="PANTHER" id="PTHR10884">
    <property type="entry name" value="NADH DEHYDROGENASE UBIQUINONE IRON-SULFUR PROTEIN 3"/>
    <property type="match status" value="1"/>
</dbReference>
<dbReference type="Pfam" id="PF00329">
    <property type="entry name" value="Complex1_30kDa"/>
    <property type="match status" value="1"/>
</dbReference>
<dbReference type="SUPFAM" id="SSF143243">
    <property type="entry name" value="Nqo5-like"/>
    <property type="match status" value="1"/>
</dbReference>
<dbReference type="PROSITE" id="PS00542">
    <property type="entry name" value="COMPLEX1_30K"/>
    <property type="match status" value="1"/>
</dbReference>
<feature type="chain" id="PRO_0000358035" description="NADH-quinone oxidoreductase subunit C">
    <location>
        <begin position="1"/>
        <end position="202"/>
    </location>
</feature>
<evidence type="ECO:0000255" key="1">
    <source>
        <dbReference type="HAMAP-Rule" id="MF_01357"/>
    </source>
</evidence>